<accession>Q83XM3</accession>
<protein>
    <recommendedName>
        <fullName evidence="1">Glucose-6-phosphate isomerase</fullName>
        <shortName evidence="1">GPI</shortName>
        <ecNumber evidence="1">5.3.1.9</ecNumber>
    </recommendedName>
    <alternativeName>
        <fullName evidence="1">Phosphoglucose isomerase</fullName>
        <shortName evidence="1">PGI</shortName>
    </alternativeName>
    <alternativeName>
        <fullName evidence="1">Phosphohexose isomerase</fullName>
        <shortName evidence="1">PHI</shortName>
    </alternativeName>
</protein>
<gene>
    <name evidence="1" type="primary">pgi</name>
    <name type="synonym">fruI</name>
</gene>
<dbReference type="EC" id="5.3.1.9" evidence="1"/>
<dbReference type="EMBL" id="AJ560768">
    <property type="protein sequence ID" value="CAD90946.1"/>
    <property type="molecule type" value="Genomic_DNA"/>
</dbReference>
<dbReference type="SMR" id="Q83XM3"/>
<dbReference type="STRING" id="1613.GCA_002119645_02103"/>
<dbReference type="BioCyc" id="MetaCyc:MONOMER-13041"/>
<dbReference type="UniPathway" id="UPA00109">
    <property type="reaction ID" value="UER00181"/>
</dbReference>
<dbReference type="UniPathway" id="UPA00138"/>
<dbReference type="GO" id="GO:0005829">
    <property type="term" value="C:cytosol"/>
    <property type="evidence" value="ECO:0007669"/>
    <property type="project" value="TreeGrafter"/>
</dbReference>
<dbReference type="GO" id="GO:0097367">
    <property type="term" value="F:carbohydrate derivative binding"/>
    <property type="evidence" value="ECO:0007669"/>
    <property type="project" value="InterPro"/>
</dbReference>
<dbReference type="GO" id="GO:0004347">
    <property type="term" value="F:glucose-6-phosphate isomerase activity"/>
    <property type="evidence" value="ECO:0007669"/>
    <property type="project" value="UniProtKB-UniRule"/>
</dbReference>
<dbReference type="GO" id="GO:0048029">
    <property type="term" value="F:monosaccharide binding"/>
    <property type="evidence" value="ECO:0007669"/>
    <property type="project" value="TreeGrafter"/>
</dbReference>
<dbReference type="GO" id="GO:0006094">
    <property type="term" value="P:gluconeogenesis"/>
    <property type="evidence" value="ECO:0007669"/>
    <property type="project" value="UniProtKB-UniRule"/>
</dbReference>
<dbReference type="GO" id="GO:0051156">
    <property type="term" value="P:glucose 6-phosphate metabolic process"/>
    <property type="evidence" value="ECO:0007669"/>
    <property type="project" value="TreeGrafter"/>
</dbReference>
<dbReference type="GO" id="GO:0006096">
    <property type="term" value="P:glycolytic process"/>
    <property type="evidence" value="ECO:0007669"/>
    <property type="project" value="UniProtKB-UniRule"/>
</dbReference>
<dbReference type="CDD" id="cd05015">
    <property type="entry name" value="SIS_PGI_1"/>
    <property type="match status" value="1"/>
</dbReference>
<dbReference type="CDD" id="cd05016">
    <property type="entry name" value="SIS_PGI_2"/>
    <property type="match status" value="1"/>
</dbReference>
<dbReference type="FunFam" id="3.40.50.10490:FF:000015">
    <property type="entry name" value="Glucose-6-phosphate isomerase"/>
    <property type="match status" value="1"/>
</dbReference>
<dbReference type="FunFam" id="3.40.50.10490:FF:000016">
    <property type="entry name" value="Glucose-6-phosphate isomerase"/>
    <property type="match status" value="1"/>
</dbReference>
<dbReference type="Gene3D" id="3.40.50.10490">
    <property type="entry name" value="Glucose-6-phosphate isomerase like protein, domain 1"/>
    <property type="match status" value="2"/>
</dbReference>
<dbReference type="HAMAP" id="MF_00473">
    <property type="entry name" value="G6P_isomerase"/>
    <property type="match status" value="1"/>
</dbReference>
<dbReference type="InterPro" id="IPR001672">
    <property type="entry name" value="G6P_Isomerase"/>
</dbReference>
<dbReference type="InterPro" id="IPR018189">
    <property type="entry name" value="Phosphoglucose_isomerase_CS"/>
</dbReference>
<dbReference type="InterPro" id="IPR046348">
    <property type="entry name" value="SIS_dom_sf"/>
</dbReference>
<dbReference type="InterPro" id="IPR035476">
    <property type="entry name" value="SIS_PGI_1"/>
</dbReference>
<dbReference type="InterPro" id="IPR035482">
    <property type="entry name" value="SIS_PGI_2"/>
</dbReference>
<dbReference type="NCBIfam" id="NF010697">
    <property type="entry name" value="PRK14097.1"/>
    <property type="match status" value="1"/>
</dbReference>
<dbReference type="PANTHER" id="PTHR11469">
    <property type="entry name" value="GLUCOSE-6-PHOSPHATE ISOMERASE"/>
    <property type="match status" value="1"/>
</dbReference>
<dbReference type="PANTHER" id="PTHR11469:SF1">
    <property type="entry name" value="GLUCOSE-6-PHOSPHATE ISOMERASE"/>
    <property type="match status" value="1"/>
</dbReference>
<dbReference type="Pfam" id="PF00342">
    <property type="entry name" value="PGI"/>
    <property type="match status" value="1"/>
</dbReference>
<dbReference type="PRINTS" id="PR00662">
    <property type="entry name" value="G6PISOMERASE"/>
</dbReference>
<dbReference type="SUPFAM" id="SSF53697">
    <property type="entry name" value="SIS domain"/>
    <property type="match status" value="1"/>
</dbReference>
<dbReference type="PROSITE" id="PS00765">
    <property type="entry name" value="P_GLUCOSE_ISOMERASE_1"/>
    <property type="match status" value="1"/>
</dbReference>
<dbReference type="PROSITE" id="PS00174">
    <property type="entry name" value="P_GLUCOSE_ISOMERASE_2"/>
    <property type="match status" value="1"/>
</dbReference>
<dbReference type="PROSITE" id="PS51463">
    <property type="entry name" value="P_GLUCOSE_ISOMERASE_3"/>
    <property type="match status" value="1"/>
</dbReference>
<proteinExistence type="inferred from homology"/>
<feature type="chain" id="PRO_0000180657" description="Glucose-6-phosphate isomerase">
    <location>
        <begin position="1"/>
        <end position="450"/>
    </location>
</feature>
<feature type="active site" description="Proton donor" evidence="1">
    <location>
        <position position="290"/>
    </location>
</feature>
<feature type="active site" evidence="1">
    <location>
        <position position="311"/>
    </location>
</feature>
<feature type="active site" evidence="1">
    <location>
        <position position="425"/>
    </location>
</feature>
<keyword id="KW-0963">Cytoplasm</keyword>
<keyword id="KW-0312">Gluconeogenesis</keyword>
<keyword id="KW-0324">Glycolysis</keyword>
<keyword id="KW-0413">Isomerase</keyword>
<organism>
    <name type="scientific">Limosilactobacillus fermentum</name>
    <name type="common">Lactobacillus fermentum</name>
    <dbReference type="NCBI Taxonomy" id="1613"/>
    <lineage>
        <taxon>Bacteria</taxon>
        <taxon>Bacillati</taxon>
        <taxon>Bacillota</taxon>
        <taxon>Bacilli</taxon>
        <taxon>Lactobacillales</taxon>
        <taxon>Lactobacillaceae</taxon>
        <taxon>Limosilactobacillus</taxon>
    </lineage>
</organism>
<comment type="function">
    <text evidence="1">Catalyzes the reversible isomerization of glucose-6-phosphate to fructose-6-phosphate.</text>
</comment>
<comment type="catalytic activity">
    <reaction evidence="1">
        <text>alpha-D-glucose 6-phosphate = beta-D-fructose 6-phosphate</text>
        <dbReference type="Rhea" id="RHEA:11816"/>
        <dbReference type="ChEBI" id="CHEBI:57634"/>
        <dbReference type="ChEBI" id="CHEBI:58225"/>
        <dbReference type="EC" id="5.3.1.9"/>
    </reaction>
</comment>
<comment type="pathway">
    <text evidence="1">Carbohydrate biosynthesis; gluconeogenesis.</text>
</comment>
<comment type="pathway">
    <text evidence="1">Carbohydrate degradation; glycolysis; D-glyceraldehyde 3-phosphate and glycerone phosphate from D-glucose: step 2/4.</text>
</comment>
<comment type="subcellular location">
    <subcellularLocation>
        <location evidence="1">Cytoplasm</location>
    </subcellularLocation>
</comment>
<comment type="similarity">
    <text evidence="1">Belongs to the GPI family.</text>
</comment>
<evidence type="ECO:0000255" key="1">
    <source>
        <dbReference type="HAMAP-Rule" id="MF_00473"/>
    </source>
</evidence>
<reference key="1">
    <citation type="submission" date="2003-05" db="EMBL/GenBank/DDBJ databases">
        <title>Metabolic engineering of lactic acid bacteria for production of fermentation metabolites.</title>
        <authorList>
            <person name="Helanto M.E."/>
        </authorList>
    </citation>
    <scope>NUCLEOTIDE SEQUENCE [GENOMIC DNA]</scope>
    <source>
        <strain>NRRL B-1932</strain>
    </source>
</reference>
<sequence length="450" mass="49417">METLSFDSSALKKFVHPNELGEMQAMVTAADSELRNGTGAGADFRDWLHLPTDYDKDEFARIEAAAKKIQADSEVLVVIGIGGSYLGARMAVDFLHHSFYQAQTAADRKQPLVLFAGNSLSSSYIADLIDVIGDRDFSVNVISKSGTTTEPSIAFRVFRQLLEDKYGVDGANARIYATTDRQRGALKTEADAEGWGTFVIPDGVGGRFSVLTAVGLLPIAVSGADIDQLMAGAAKAEATYVNPDLTQNEAYQYAAYRNILYRKGYTTELLENYEPNMTMLAEWWKQLAGESEGKDQKGIYPSSANFTTDLHSLGQYIQEGRRNLMETVVKLAEPNHNVKVPSAKSDFDGLKYLEGKEIDWVNTQAYRAVVAAHTTGGVPVMTVNIAKEDEFTLGYLIYFFEVAIAISGYLNGINPFNQPGVEAYKTNMFGLLGKPGFEEIGEQLKKEMDD</sequence>
<name>G6PI_LIMFE</name>